<protein>
    <recommendedName>
        <fullName evidence="12">Solute carrier family 26 member 9</fullName>
    </recommendedName>
    <alternativeName>
        <fullName>Anion transporter/exchanger protein 9</fullName>
    </alternativeName>
</protein>
<accession>Q7LBE3</accession>
<accession>A7E2V6</accession>
<accession>B1AVM8</accession>
<accession>B1AVM9</accession>
<accession>B7ZKK2</accession>
<accession>Q96PK9</accession>
<accession>Q96RN0</accession>
<feature type="chain" id="PRO_0000324492" description="Solute carrier family 26 member 9">
    <location>
        <begin position="1"/>
        <end position="791"/>
    </location>
</feature>
<feature type="topological domain" description="Cytoplasmic" evidence="12">
    <location>
        <begin position="1"/>
        <end position="70"/>
    </location>
</feature>
<feature type="transmembrane region" description="Helical" evidence="9 14">
    <location>
        <begin position="71"/>
        <end position="96"/>
    </location>
</feature>
<feature type="topological domain" description="Extracellular" evidence="12">
    <location>
        <begin position="97"/>
        <end position="99"/>
    </location>
</feature>
<feature type="transmembrane region" description="Helical" evidence="9 14">
    <location>
        <begin position="100"/>
        <end position="117"/>
    </location>
</feature>
<feature type="topological domain" description="Cytoplasmic" evidence="12">
    <location>
        <begin position="118"/>
        <end position="128"/>
    </location>
</feature>
<feature type="transmembrane region" description="Helical" evidence="9 14">
    <location>
        <begin position="129"/>
        <end position="142"/>
    </location>
</feature>
<feature type="topological domain" description="Extracellular" evidence="12">
    <location>
        <begin position="143"/>
        <end position="171"/>
    </location>
</feature>
<feature type="transmembrane region" description="Helical" evidence="9 14">
    <location>
        <begin position="172"/>
        <end position="190"/>
    </location>
</feature>
<feature type="topological domain" description="Cytoplasmic" evidence="12">
    <location>
        <begin position="191"/>
        <end position="202"/>
    </location>
</feature>
<feature type="transmembrane region" description="Helical" evidence="9 14">
    <location>
        <begin position="203"/>
        <end position="224"/>
    </location>
</feature>
<feature type="topological domain" description="Extracellular" evidence="12">
    <location>
        <begin position="225"/>
        <end position="235"/>
    </location>
</feature>
<feature type="intramembrane region" description="Helical" evidence="1">
    <location>
        <begin position="236"/>
        <end position="244"/>
    </location>
</feature>
<feature type="topological domain" description="Extracellular" evidence="12">
    <location>
        <begin position="245"/>
        <end position="254"/>
    </location>
</feature>
<feature type="transmembrane region" description="Helical" evidence="9 14">
    <location>
        <begin position="255"/>
        <end position="273"/>
    </location>
</feature>
<feature type="topological domain" description="Cytoplasmic" evidence="12">
    <location>
        <begin position="274"/>
        <end position="281"/>
    </location>
</feature>
<feature type="transmembrane region" description="Helical" evidence="9 14">
    <location>
        <begin position="282"/>
        <end position="297"/>
    </location>
</feature>
<feature type="topological domain" description="Extracellular" evidence="12">
    <location>
        <begin position="298"/>
        <end position="327"/>
    </location>
</feature>
<feature type="transmembrane region" description="Helical" evidence="9 14">
    <location>
        <begin position="328"/>
        <end position="348"/>
    </location>
</feature>
<feature type="topological domain" description="Cytoplasmic" evidence="12">
    <location>
        <begin position="349"/>
        <end position="366"/>
    </location>
</feature>
<feature type="transmembrane region" description="Helical" evidence="9 14">
    <location>
        <begin position="367"/>
        <end position="382"/>
    </location>
</feature>
<feature type="topological domain" description="Extracellular" evidence="12">
    <location>
        <begin position="383"/>
        <end position="390"/>
    </location>
</feature>
<feature type="transmembrane region" description="Helical" evidence="1">
    <location>
        <begin position="391"/>
        <end position="400"/>
    </location>
</feature>
<feature type="topological domain" description="Cytoplasmic" evidence="12">
    <location>
        <begin position="401"/>
        <end position="404"/>
    </location>
</feature>
<feature type="transmembrane region" description="Helical" evidence="9 14">
    <location>
        <begin position="405"/>
        <end position="423"/>
    </location>
</feature>
<feature type="topological domain" description="Extracellular" evidence="12">
    <location>
        <begin position="424"/>
        <end position="428"/>
    </location>
</feature>
<feature type="transmembrane region" description="Helical" evidence="9 14">
    <location>
        <begin position="429"/>
        <end position="450"/>
    </location>
</feature>
<feature type="topological domain" description="Cytoplasmic" evidence="12">
    <location>
        <begin position="451"/>
        <end position="464"/>
    </location>
</feature>
<feature type="transmembrane region" description="Helical" evidence="9 14">
    <location>
        <begin position="465"/>
        <end position="476"/>
    </location>
</feature>
<feature type="topological domain" description="Extracellular" evidence="12">
    <location>
        <position position="477"/>
    </location>
</feature>
<feature type="transmembrane region" description="Helical" evidence="9 14">
    <location>
        <begin position="478"/>
        <end position="489"/>
    </location>
</feature>
<feature type="topological domain" description="Cytoplasmic" evidence="12">
    <location>
        <begin position="490"/>
        <end position="791"/>
    </location>
</feature>
<feature type="domain" description="STAS" evidence="2">
    <location>
        <begin position="519"/>
        <end position="737"/>
    </location>
</feature>
<feature type="region of interest" description="Disordered" evidence="3">
    <location>
        <begin position="602"/>
        <end position="650"/>
    </location>
</feature>
<feature type="compositionally biased region" description="Polar residues" evidence="3">
    <location>
        <begin position="610"/>
        <end position="626"/>
    </location>
</feature>
<feature type="compositionally biased region" description="Low complexity" evidence="3">
    <location>
        <begin position="628"/>
        <end position="650"/>
    </location>
</feature>
<feature type="splice variant" id="VSP_054056" description="In isoform 2." evidence="11">
    <original>L</original>
    <variation>LESLSAAGGCYPYRSESLVSPLFTRQALAAMDKPPAHSTPPTSALSLAAEGHLDFQLLRVSQKQKDKYNCAGLLYKLQKVSQSPHGSVSDGVRLSRT</variation>
    <location>
        <position position="791"/>
    </location>
</feature>
<feature type="sequence variant" id="VAR_068683" description="Displays higher channel activity and enhanced chloride-bicarbonate ion exchange; dbSNP:rs75021701." evidence="7">
    <original>Y</original>
    <variation>N</variation>
    <location>
        <position position="70"/>
    </location>
</feature>
<feature type="sequence variant" id="VAR_068684" description="Results in smaller halide currents but not for thiocyanate ion; dbSNP:rs77497889." evidence="7">
    <original>T</original>
    <variation>N</variation>
    <location>
        <position position="127"/>
    </location>
</feature>
<feature type="sequence variant" id="VAR_068685" description="In dbSNP:rs112659452." evidence="7">
    <original>I</original>
    <variation>T</variation>
    <location>
        <position position="384"/>
    </location>
</feature>
<feature type="sequence variant" id="VAR_068686" description="In dbSNP:rs201823199." evidence="7">
    <original>R</original>
    <variation>W</variation>
    <location>
        <position position="575"/>
    </location>
</feature>
<feature type="sequence variant" id="VAR_068687" description="In dbSNP:rs74146719." evidence="7">
    <original>P</original>
    <variation>L</variation>
    <location>
        <position position="606"/>
    </location>
</feature>
<feature type="sequence variant" id="VAR_068688" description="Decreased plasma membrane expression which partially accounts for decreased whole cell currents; transport is reduced to about 50%; dbSNP:rs34992672." evidence="7">
    <original>V</original>
    <variation>L</variation>
    <location>
        <position position="622"/>
    </location>
</feature>
<feature type="sequence variant" id="VAR_039801" description="Decreased plasma membrane expression which partially accounts for decreased whole cell currents; dbSNP:rs3811428." evidence="7">
    <original>V</original>
    <variation>M</variation>
    <location>
        <position position="744"/>
    </location>
</feature>
<feature type="sequence variant" id="VAR_039802" description="In dbSNP:rs16856462." evidence="7">
    <original>H</original>
    <variation>R</variation>
    <location>
        <position position="748"/>
    </location>
</feature>
<feature type="mutagenesis site" description="Reduced chloride ion flux." evidence="9">
    <original>Q</original>
    <variation>A</variation>
    <location>
        <position position="88"/>
    </location>
</feature>
<feature type="mutagenesis site" description="Reduced chloride ion flux." evidence="9">
    <original>I</original>
    <variation>A</variation>
    <location>
        <position position="131"/>
    </location>
</feature>
<feature type="mutagenesis site" description="Reduced chloride ion flux." evidence="9">
    <original>S</original>
    <variation>A</variation>
    <location>
        <position position="132"/>
    </location>
</feature>
<feature type="mutagenesis site" description="Reduced chloride ion flux." evidence="9">
    <original>E</original>
    <variation>A</variation>
    <location>
        <position position="166"/>
    </location>
</feature>
<feature type="mutagenesis site" description="Increased current; when associated with A-781." evidence="9">
    <original>E</original>
    <variation>K</variation>
    <location>
        <position position="201"/>
    </location>
</feature>
<feature type="mutagenesis site" description="Increased current." evidence="9">
    <original>EQEMFGSM</original>
    <variation>AAAGGG</variation>
    <location>
        <begin position="775"/>
        <end position="782"/>
    </location>
</feature>
<feature type="mutagenesis site" description="Increased current." evidence="9">
    <original>EQ</original>
    <variation>AA</variation>
    <location>
        <begin position="775"/>
        <end position="776"/>
    </location>
</feature>
<feature type="mutagenesis site" description="Increased current; when associated with K-201." evidence="9">
    <original>S</original>
    <variation>A</variation>
    <location>
        <position position="781"/>
    </location>
</feature>
<feature type="mutagenesis site" description="Increased current." evidence="9">
    <original>F</original>
    <variation>G</variation>
    <location>
        <position position="783"/>
    </location>
</feature>
<feature type="sequence conflict" description="In Ref. 5; AAI51209." evidence="12" ref="5">
    <original>K</original>
    <variation>N</variation>
    <location>
        <position position="64"/>
    </location>
</feature>
<feature type="strand" evidence="15">
    <location>
        <begin position="7"/>
        <end position="13"/>
    </location>
</feature>
<feature type="helix" evidence="15">
    <location>
        <begin position="17"/>
        <end position="23"/>
    </location>
</feature>
<feature type="turn" evidence="15">
    <location>
        <begin position="48"/>
        <end position="51"/>
    </location>
</feature>
<feature type="helix" evidence="15">
    <location>
        <begin position="52"/>
        <end position="55"/>
    </location>
</feature>
<feature type="helix" evidence="15">
    <location>
        <begin position="58"/>
        <end position="61"/>
    </location>
</feature>
<feature type="helix" evidence="15">
    <location>
        <begin position="67"/>
        <end position="95"/>
    </location>
</feature>
<feature type="helix" evidence="15">
    <location>
        <begin position="102"/>
        <end position="105"/>
    </location>
</feature>
<feature type="turn" evidence="15">
    <location>
        <begin position="106"/>
        <end position="109"/>
    </location>
</feature>
<feature type="helix" evidence="15">
    <location>
        <begin position="110"/>
        <end position="117"/>
    </location>
</feature>
<feature type="helix" evidence="15">
    <location>
        <begin position="129"/>
        <end position="141"/>
    </location>
</feature>
<feature type="helix" evidence="15">
    <location>
        <begin position="145"/>
        <end position="147"/>
    </location>
</feature>
<feature type="helix" evidence="15">
    <location>
        <begin position="162"/>
        <end position="190"/>
    </location>
</feature>
<feature type="turn" evidence="15">
    <location>
        <begin position="191"/>
        <end position="193"/>
    </location>
</feature>
<feature type="helix" evidence="15">
    <location>
        <begin position="201"/>
        <end position="218"/>
    </location>
</feature>
<feature type="helix" evidence="15">
    <location>
        <begin position="220"/>
        <end position="224"/>
    </location>
</feature>
<feature type="helix" evidence="15">
    <location>
        <begin position="236"/>
        <end position="246"/>
    </location>
</feature>
<feature type="helix" evidence="15">
    <location>
        <begin position="248"/>
        <end position="250"/>
    </location>
</feature>
<feature type="helix" evidence="15">
    <location>
        <begin position="253"/>
        <end position="271"/>
    </location>
</feature>
<feature type="turn" evidence="15">
    <location>
        <begin position="272"/>
        <end position="275"/>
    </location>
</feature>
<feature type="strand" evidence="15">
    <location>
        <begin position="277"/>
        <end position="279"/>
    </location>
</feature>
<feature type="helix" evidence="15">
    <location>
        <begin position="286"/>
        <end position="298"/>
    </location>
</feature>
<feature type="turn" evidence="15">
    <location>
        <begin position="299"/>
        <end position="302"/>
    </location>
</feature>
<feature type="helix" evidence="15">
    <location>
        <begin position="303"/>
        <end position="306"/>
    </location>
</feature>
<feature type="helix" evidence="15">
    <location>
        <begin position="327"/>
        <end position="332"/>
    </location>
</feature>
<feature type="helix" evidence="15">
    <location>
        <begin position="334"/>
        <end position="359"/>
    </location>
</feature>
<feature type="helix" evidence="15">
    <location>
        <begin position="365"/>
        <end position="380"/>
    </location>
</feature>
<feature type="turn" evidence="15">
    <location>
        <begin position="381"/>
        <end position="383"/>
    </location>
</feature>
<feature type="helix" evidence="15">
    <location>
        <begin position="391"/>
        <end position="399"/>
    </location>
</feature>
<feature type="helix" evidence="15">
    <location>
        <begin position="406"/>
        <end position="418"/>
    </location>
</feature>
<feature type="turn" evidence="15">
    <location>
        <begin position="419"/>
        <end position="424"/>
    </location>
</feature>
<feature type="helix" evidence="15">
    <location>
        <begin position="432"/>
        <end position="440"/>
    </location>
</feature>
<feature type="helix" evidence="15">
    <location>
        <begin position="443"/>
        <end position="446"/>
    </location>
</feature>
<feature type="helix" evidence="15">
    <location>
        <begin position="447"/>
        <end position="450"/>
    </location>
</feature>
<feature type="helix" evidence="15">
    <location>
        <begin position="451"/>
        <end position="458"/>
    </location>
</feature>
<feature type="helix" evidence="15">
    <location>
        <begin position="462"/>
        <end position="475"/>
    </location>
</feature>
<feature type="helix" evidence="15">
    <location>
        <begin position="478"/>
        <end position="496"/>
    </location>
</feature>
<feature type="strand" evidence="15">
    <location>
        <begin position="506"/>
        <end position="508"/>
    </location>
</feature>
<feature type="turn" evidence="15">
    <location>
        <begin position="517"/>
        <end position="519"/>
    </location>
</feature>
<feature type="strand" evidence="15">
    <location>
        <begin position="521"/>
        <end position="524"/>
    </location>
</feature>
<feature type="strand" evidence="15">
    <location>
        <begin position="529"/>
        <end position="533"/>
    </location>
</feature>
<feature type="turn" evidence="15">
    <location>
        <begin position="540"/>
        <end position="542"/>
    </location>
</feature>
<feature type="helix" evidence="15">
    <location>
        <begin position="543"/>
        <end position="554"/>
    </location>
</feature>
<feature type="helix" evidence="15">
    <location>
        <begin position="558"/>
        <end position="565"/>
    </location>
</feature>
<feature type="strand" evidence="15">
    <location>
        <begin position="656"/>
        <end position="658"/>
    </location>
</feature>
<feature type="strand" evidence="15">
    <location>
        <begin position="663"/>
        <end position="668"/>
    </location>
</feature>
<feature type="helix" evidence="15">
    <location>
        <begin position="677"/>
        <end position="692"/>
    </location>
</feature>
<feature type="strand" evidence="15">
    <location>
        <begin position="696"/>
        <end position="700"/>
    </location>
</feature>
<feature type="helix" evidence="15">
    <location>
        <begin position="704"/>
        <end position="712"/>
    </location>
</feature>
<feature type="turn" evidence="15">
    <location>
        <begin position="713"/>
        <end position="719"/>
    </location>
</feature>
<feature type="helix" evidence="15">
    <location>
        <begin position="723"/>
        <end position="725"/>
    </location>
</feature>
<feature type="strand" evidence="15">
    <location>
        <begin position="726"/>
        <end position="729"/>
    </location>
</feature>
<feature type="helix" evidence="15">
    <location>
        <begin position="730"/>
        <end position="740"/>
    </location>
</feature>
<feature type="helix" evidence="15">
    <location>
        <begin position="774"/>
        <end position="777"/>
    </location>
</feature>
<feature type="sequence conflict" description="In Ref. 2; AAL26867 and 4; EAW91587." evidence="12" ref="2 4">
    <original>R</original>
    <variation>G</variation>
    <location sequence="Q7LBE3-2">
        <position position="804"/>
    </location>
</feature>
<name>S26A9_HUMAN</name>
<evidence type="ECO:0000250" key="1">
    <source>
        <dbReference type="UniProtKB" id="Q8BU91"/>
    </source>
</evidence>
<evidence type="ECO:0000255" key="2">
    <source>
        <dbReference type="PROSITE-ProRule" id="PRU00198"/>
    </source>
</evidence>
<evidence type="ECO:0000256" key="3">
    <source>
        <dbReference type="SAM" id="MobiDB-lite"/>
    </source>
</evidence>
<evidence type="ECO:0000269" key="4">
    <source>
    </source>
</evidence>
<evidence type="ECO:0000269" key="5">
    <source>
    </source>
</evidence>
<evidence type="ECO:0000269" key="6">
    <source>
    </source>
</evidence>
<evidence type="ECO:0000269" key="7">
    <source>
    </source>
</evidence>
<evidence type="ECO:0000269" key="8">
    <source>
    </source>
</evidence>
<evidence type="ECO:0000269" key="9">
    <source>
    </source>
</evidence>
<evidence type="ECO:0000303" key="10">
    <source>
    </source>
</evidence>
<evidence type="ECO:0000303" key="11">
    <source ref="2"/>
</evidence>
<evidence type="ECO:0000305" key="12"/>
<evidence type="ECO:0000312" key="13">
    <source>
        <dbReference type="HGNC" id="HGNC:14469"/>
    </source>
</evidence>
<evidence type="ECO:0007744" key="14">
    <source>
        <dbReference type="PDB" id="7CH1"/>
    </source>
</evidence>
<evidence type="ECO:0007829" key="15">
    <source>
        <dbReference type="PDB" id="7CH1"/>
    </source>
</evidence>
<proteinExistence type="evidence at protein level"/>
<gene>
    <name evidence="10 13" type="primary">SLC26A9</name>
</gene>
<dbReference type="EMBL" id="AF331525">
    <property type="protein sequence ID" value="AAK95667.1"/>
    <property type="molecule type" value="mRNA"/>
</dbReference>
<dbReference type="EMBL" id="AF314958">
    <property type="protein sequence ID" value="AAL26867.1"/>
    <property type="molecule type" value="mRNA"/>
</dbReference>
<dbReference type="EMBL" id="AL713965">
    <property type="status" value="NOT_ANNOTATED_CDS"/>
    <property type="molecule type" value="Genomic_DNA"/>
</dbReference>
<dbReference type="EMBL" id="CH471067">
    <property type="protein sequence ID" value="EAW91587.1"/>
    <property type="molecule type" value="Genomic_DNA"/>
</dbReference>
<dbReference type="EMBL" id="CH471067">
    <property type="protein sequence ID" value="EAW91588.1"/>
    <property type="molecule type" value="Genomic_DNA"/>
</dbReference>
<dbReference type="EMBL" id="BC136538">
    <property type="protein sequence ID" value="AAI36539.1"/>
    <property type="molecule type" value="mRNA"/>
</dbReference>
<dbReference type="EMBL" id="BC151208">
    <property type="protein sequence ID" value="AAI51209.1"/>
    <property type="molecule type" value="mRNA"/>
</dbReference>
<dbReference type="CCDS" id="CCDS30989.1">
    <molecule id="Q7LBE3-2"/>
</dbReference>
<dbReference type="CCDS" id="CCDS30990.1">
    <molecule id="Q7LBE3-1"/>
</dbReference>
<dbReference type="RefSeq" id="NP_443166.1">
    <molecule id="Q7LBE3-1"/>
    <property type="nucleotide sequence ID" value="NM_052934.4"/>
</dbReference>
<dbReference type="RefSeq" id="NP_599152.2">
    <molecule id="Q7LBE3-2"/>
    <property type="nucleotide sequence ID" value="NM_134325.3"/>
</dbReference>
<dbReference type="PDB" id="7CH1">
    <property type="method" value="EM"/>
    <property type="resolution" value="2.60 A"/>
    <property type="chains" value="A/B=1-791"/>
</dbReference>
<dbReference type="PDBsum" id="7CH1"/>
<dbReference type="EMDB" id="EMD-30368"/>
<dbReference type="SMR" id="Q7LBE3"/>
<dbReference type="BioGRID" id="125409">
    <property type="interactions" value="2"/>
</dbReference>
<dbReference type="FunCoup" id="Q7LBE3">
    <property type="interactions" value="85"/>
</dbReference>
<dbReference type="IntAct" id="Q7LBE3">
    <property type="interactions" value="3"/>
</dbReference>
<dbReference type="STRING" id="9606.ENSP00000356102"/>
<dbReference type="ChEMBL" id="CHEMBL4523359"/>
<dbReference type="TCDB" id="2.A.53.2.15">
    <property type="family name" value="the sulfate permease (sulp) family"/>
</dbReference>
<dbReference type="GlyCosmos" id="Q7LBE3">
    <property type="glycosylation" value="1 site, 1 glycan"/>
</dbReference>
<dbReference type="GlyGen" id="Q7LBE3">
    <property type="glycosylation" value="1 site, 1 O-linked glycan (1 site)"/>
</dbReference>
<dbReference type="iPTMnet" id="Q7LBE3"/>
<dbReference type="PhosphoSitePlus" id="Q7LBE3"/>
<dbReference type="BioMuta" id="SLC26A9"/>
<dbReference type="DMDM" id="74749908"/>
<dbReference type="jPOST" id="Q7LBE3"/>
<dbReference type="MassIVE" id="Q7LBE3"/>
<dbReference type="PaxDb" id="9606-ENSP00000356102"/>
<dbReference type="PeptideAtlas" id="Q7LBE3"/>
<dbReference type="ProteomicsDB" id="68849">
    <molecule id="Q7LBE3-1"/>
</dbReference>
<dbReference type="Antibodypedia" id="34575">
    <property type="antibodies" value="47 antibodies from 17 providers"/>
</dbReference>
<dbReference type="DNASU" id="115019"/>
<dbReference type="Ensembl" id="ENST00000340781.8">
    <molecule id="Q7LBE3-2"/>
    <property type="protein sequence ID" value="ENSP00000341682.4"/>
    <property type="gene ID" value="ENSG00000174502.19"/>
</dbReference>
<dbReference type="Ensembl" id="ENST00000367134.2">
    <molecule id="Q7LBE3-2"/>
    <property type="protein sequence ID" value="ENSP00000356102.2"/>
    <property type="gene ID" value="ENSG00000174502.19"/>
</dbReference>
<dbReference type="Ensembl" id="ENST00000367135.8">
    <molecule id="Q7LBE3-1"/>
    <property type="protein sequence ID" value="ENSP00000356103.3"/>
    <property type="gene ID" value="ENSG00000174502.19"/>
</dbReference>
<dbReference type="GeneID" id="115019"/>
<dbReference type="KEGG" id="hsa:115019"/>
<dbReference type="MANE-Select" id="ENST00000367135.8">
    <property type="protein sequence ID" value="ENSP00000356103.3"/>
    <property type="RefSeq nucleotide sequence ID" value="NM_052934.4"/>
    <property type="RefSeq protein sequence ID" value="NP_443166.1"/>
</dbReference>
<dbReference type="UCSC" id="uc001hdp.5">
    <molecule id="Q7LBE3-1"/>
    <property type="organism name" value="human"/>
</dbReference>
<dbReference type="AGR" id="HGNC:14469"/>
<dbReference type="CTD" id="115019"/>
<dbReference type="DisGeNET" id="115019"/>
<dbReference type="GeneCards" id="SLC26A9"/>
<dbReference type="HGNC" id="HGNC:14469">
    <property type="gene designation" value="SLC26A9"/>
</dbReference>
<dbReference type="HPA" id="ENSG00000174502">
    <property type="expression patterns" value="Group enriched (salivary gland, stomach)"/>
</dbReference>
<dbReference type="MalaCards" id="SLC26A9"/>
<dbReference type="MIM" id="608481">
    <property type="type" value="gene"/>
</dbReference>
<dbReference type="neXtProt" id="NX_Q7LBE3"/>
<dbReference type="OpenTargets" id="ENSG00000174502"/>
<dbReference type="Orphanet" id="586">
    <property type="disease" value="Cystic fibrosis"/>
</dbReference>
<dbReference type="PharmGKB" id="PA37886"/>
<dbReference type="VEuPathDB" id="HostDB:ENSG00000174502"/>
<dbReference type="eggNOG" id="KOG0236">
    <property type="taxonomic scope" value="Eukaryota"/>
</dbReference>
<dbReference type="GeneTree" id="ENSGT01070000253775"/>
<dbReference type="HOGENOM" id="CLU_003182_9_4_1"/>
<dbReference type="InParanoid" id="Q7LBE3"/>
<dbReference type="OMA" id="WKDMMGT"/>
<dbReference type="OrthoDB" id="288203at2759"/>
<dbReference type="PAN-GO" id="Q7LBE3">
    <property type="GO annotations" value="6 GO annotations based on evolutionary models"/>
</dbReference>
<dbReference type="PhylomeDB" id="Q7LBE3"/>
<dbReference type="TreeFam" id="TF313784"/>
<dbReference type="PathwayCommons" id="Q7LBE3"/>
<dbReference type="Reactome" id="R-HSA-427601">
    <property type="pathway name" value="Multifunctional anion exchangers"/>
</dbReference>
<dbReference type="SignaLink" id="Q7LBE3"/>
<dbReference type="BioGRID-ORCS" id="115019">
    <property type="hits" value="14 hits in 1152 CRISPR screens"/>
</dbReference>
<dbReference type="GenomeRNAi" id="115019"/>
<dbReference type="Pharos" id="Q7LBE3">
    <property type="development level" value="Tbio"/>
</dbReference>
<dbReference type="PRO" id="PR:Q7LBE3"/>
<dbReference type="Proteomes" id="UP000005640">
    <property type="component" value="Chromosome 1"/>
</dbReference>
<dbReference type="RNAct" id="Q7LBE3">
    <property type="molecule type" value="protein"/>
</dbReference>
<dbReference type="Bgee" id="ENSG00000174502">
    <property type="expression patterns" value="Expressed in parotid gland and 110 other cell types or tissues"/>
</dbReference>
<dbReference type="GO" id="GO:0016324">
    <property type="term" value="C:apical plasma membrane"/>
    <property type="evidence" value="ECO:0000314"/>
    <property type="project" value="UniProtKB"/>
</dbReference>
<dbReference type="GO" id="GO:0009986">
    <property type="term" value="C:cell surface"/>
    <property type="evidence" value="ECO:0000314"/>
    <property type="project" value="UniProtKB"/>
</dbReference>
<dbReference type="GO" id="GO:0005789">
    <property type="term" value="C:endoplasmic reticulum membrane"/>
    <property type="evidence" value="ECO:0000314"/>
    <property type="project" value="UniProtKB"/>
</dbReference>
<dbReference type="GO" id="GO:0010008">
    <property type="term" value="C:endosome membrane"/>
    <property type="evidence" value="ECO:0000314"/>
    <property type="project" value="UniProtKB"/>
</dbReference>
<dbReference type="GO" id="GO:0070062">
    <property type="term" value="C:extracellular exosome"/>
    <property type="evidence" value="ECO:0007005"/>
    <property type="project" value="UniProtKB"/>
</dbReference>
<dbReference type="GO" id="GO:0000139">
    <property type="term" value="C:Golgi membrane"/>
    <property type="evidence" value="ECO:0000314"/>
    <property type="project" value="UniProtKB"/>
</dbReference>
<dbReference type="GO" id="GO:0005886">
    <property type="term" value="C:plasma membrane"/>
    <property type="evidence" value="ECO:0000314"/>
    <property type="project" value="UniProtKB"/>
</dbReference>
<dbReference type="GO" id="GO:0051117">
    <property type="term" value="F:ATPase binding"/>
    <property type="evidence" value="ECO:0000353"/>
    <property type="project" value="UniProtKB"/>
</dbReference>
<dbReference type="GO" id="GO:0015106">
    <property type="term" value="F:bicarbonate transmembrane transporter activity"/>
    <property type="evidence" value="ECO:0000318"/>
    <property type="project" value="GO_Central"/>
</dbReference>
<dbReference type="GO" id="GO:0005254">
    <property type="term" value="F:chloride channel activity"/>
    <property type="evidence" value="ECO:0000314"/>
    <property type="project" value="UniProtKB"/>
</dbReference>
<dbReference type="GO" id="GO:0015108">
    <property type="term" value="F:chloride transmembrane transporter activity"/>
    <property type="evidence" value="ECO:0000318"/>
    <property type="project" value="GO_Central"/>
</dbReference>
<dbReference type="GO" id="GO:0019531">
    <property type="term" value="F:oxalate transmembrane transporter activity"/>
    <property type="evidence" value="ECO:0000318"/>
    <property type="project" value="GO_Central"/>
</dbReference>
<dbReference type="GO" id="GO:0005452">
    <property type="term" value="F:solute:inorganic anion antiporter activity"/>
    <property type="evidence" value="ECO:0000314"/>
    <property type="project" value="UniProtKB"/>
</dbReference>
<dbReference type="GO" id="GO:0015116">
    <property type="term" value="F:sulfate transmembrane transporter activity"/>
    <property type="evidence" value="ECO:0000318"/>
    <property type="project" value="GO_Central"/>
</dbReference>
<dbReference type="GO" id="GO:1902476">
    <property type="term" value="P:chloride transmembrane transport"/>
    <property type="evidence" value="ECO:0000314"/>
    <property type="project" value="UniProtKB"/>
</dbReference>
<dbReference type="GO" id="GO:0006821">
    <property type="term" value="P:chloride transport"/>
    <property type="evidence" value="ECO:0000314"/>
    <property type="project" value="UniProtKB"/>
</dbReference>
<dbReference type="GO" id="GO:0006820">
    <property type="term" value="P:monoatomic anion transport"/>
    <property type="evidence" value="ECO:0000314"/>
    <property type="project" value="UniProtKB"/>
</dbReference>
<dbReference type="GO" id="GO:0006811">
    <property type="term" value="P:monoatomic ion transport"/>
    <property type="evidence" value="ECO:0000304"/>
    <property type="project" value="Reactome"/>
</dbReference>
<dbReference type="GO" id="GO:0010628">
    <property type="term" value="P:positive regulation of gene expression"/>
    <property type="evidence" value="ECO:0000314"/>
    <property type="project" value="UniProtKB"/>
</dbReference>
<dbReference type="GO" id="GO:1902358">
    <property type="term" value="P:sulfate transmembrane transport"/>
    <property type="evidence" value="ECO:0000318"/>
    <property type="project" value="GO_Central"/>
</dbReference>
<dbReference type="CDD" id="cd07042">
    <property type="entry name" value="STAS_SulP_like_sulfate_transporter"/>
    <property type="match status" value="1"/>
</dbReference>
<dbReference type="Gene3D" id="3.30.750.24">
    <property type="entry name" value="STAS domain"/>
    <property type="match status" value="1"/>
</dbReference>
<dbReference type="InterPro" id="IPR011547">
    <property type="entry name" value="SLC26A/SulP_dom"/>
</dbReference>
<dbReference type="InterPro" id="IPR001902">
    <property type="entry name" value="SLC26A/SulP_fam"/>
</dbReference>
<dbReference type="InterPro" id="IPR002645">
    <property type="entry name" value="STAS_dom"/>
</dbReference>
<dbReference type="InterPro" id="IPR036513">
    <property type="entry name" value="STAS_dom_sf"/>
</dbReference>
<dbReference type="NCBIfam" id="TIGR00815">
    <property type="entry name" value="sulP"/>
    <property type="match status" value="1"/>
</dbReference>
<dbReference type="PANTHER" id="PTHR11814">
    <property type="entry name" value="SULFATE TRANSPORTER"/>
    <property type="match status" value="1"/>
</dbReference>
<dbReference type="Pfam" id="PF01740">
    <property type="entry name" value="STAS"/>
    <property type="match status" value="1"/>
</dbReference>
<dbReference type="Pfam" id="PF00916">
    <property type="entry name" value="Sulfate_transp"/>
    <property type="match status" value="1"/>
</dbReference>
<dbReference type="SUPFAM" id="SSF52091">
    <property type="entry name" value="SpoIIaa-like"/>
    <property type="match status" value="1"/>
</dbReference>
<dbReference type="PROSITE" id="PS50801">
    <property type="entry name" value="STAS"/>
    <property type="match status" value="1"/>
</dbReference>
<comment type="function">
    <text evidence="4 5 6 8 9">Ion transporter that can act both as an ion channel and anion exchanger (PubMed:15800055, PubMed:17673510, PubMed:26801567, PubMed:32818062). Mainly acts as a chloride channel, which mediate uncoupled chloride anion transport in an alternate-access mechanism where a saturable binding site is alternately exposed to either one or the other side of the membrane (PubMed:17673510, PubMed:26801567, PubMed:32818062). Also acts as a DIDS- and thiosulfate- sensitive anion exchanger the exchange of chloride for bicarbonate ions across the cell membrane (PubMed:11834742, PubMed:15800055).</text>
</comment>
<comment type="catalytic activity">
    <reaction evidence="6 8 9">
        <text>chloride(in) = chloride(out)</text>
        <dbReference type="Rhea" id="RHEA:29823"/>
        <dbReference type="ChEBI" id="CHEBI:17996"/>
    </reaction>
</comment>
<comment type="catalytic activity">
    <reaction evidence="5">
        <text>hydrogencarbonate(in) + chloride(out) = hydrogencarbonate(out) + chloride(in)</text>
        <dbReference type="Rhea" id="RHEA:72363"/>
        <dbReference type="ChEBI" id="CHEBI:17544"/>
        <dbReference type="ChEBI" id="CHEBI:17996"/>
    </reaction>
</comment>
<comment type="activity regulation">
    <text evidence="4 5">Inhibited by ammonium and thiosulfate.</text>
</comment>
<comment type="subunit">
    <text evidence="9">Homodimer.</text>
</comment>
<comment type="interaction">
    <interactant intactId="EBI-25464835">
        <id>Q7LBE3-1</id>
    </interactant>
    <interactant intactId="EBI-349832">
        <id>Q9HD26</id>
        <label>GOPC</label>
    </interactant>
    <organismsDiffer>false</organismsDiffer>
    <experiments>2</experiments>
</comment>
<comment type="subcellular location">
    <subcellularLocation>
        <location evidence="6 8">Cell membrane</location>
        <topology evidence="9">Multi-pass membrane protein</topology>
    </subcellularLocation>
    <subcellularLocation>
        <location evidence="8">Endomembrane system</location>
        <topology evidence="9">Multi-pass membrane protein</topology>
    </subcellularLocation>
    <text evidence="6">Localization to the cell membrane is inhibited by WNK kinases (WNK1, WNK2, WNK3 or WNK4) in a kinase-independent mechanism.</text>
</comment>
<comment type="alternative products">
    <event type="alternative splicing"/>
    <isoform>
        <id>Q7LBE3-1</id>
        <name>1</name>
        <sequence type="displayed"/>
    </isoform>
    <isoform>
        <id>Q7LBE3-2</id>
        <name>2</name>
        <sequence type="described" ref="VSP_054056"/>
    </isoform>
</comment>
<comment type="tissue specificity">
    <text evidence="4">Predominantly expressed in lung at the luminal side of the bronchiolar and alveolar epithelium of lung. To a lower extent, also expressed in pancreas and prostate.</text>
</comment>
<comment type="similarity">
    <text evidence="12">Belongs to the SLC26A/SulP transporter (TC 2.A.53) family.</text>
</comment>
<keyword id="KW-0002">3D-structure</keyword>
<keyword id="KW-0025">Alternative splicing</keyword>
<keyword id="KW-1003">Cell membrane</keyword>
<keyword id="KW-0472">Membrane</keyword>
<keyword id="KW-1267">Proteomics identification</keyword>
<keyword id="KW-1185">Reference proteome</keyword>
<keyword id="KW-0812">Transmembrane</keyword>
<keyword id="KW-1133">Transmembrane helix</keyword>
<organism>
    <name type="scientific">Homo sapiens</name>
    <name type="common">Human</name>
    <dbReference type="NCBI Taxonomy" id="9606"/>
    <lineage>
        <taxon>Eukaryota</taxon>
        <taxon>Metazoa</taxon>
        <taxon>Chordata</taxon>
        <taxon>Craniata</taxon>
        <taxon>Vertebrata</taxon>
        <taxon>Euteleostomi</taxon>
        <taxon>Mammalia</taxon>
        <taxon>Eutheria</taxon>
        <taxon>Euarchontoglires</taxon>
        <taxon>Primates</taxon>
        <taxon>Haplorrhini</taxon>
        <taxon>Catarrhini</taxon>
        <taxon>Hominidae</taxon>
        <taxon>Homo</taxon>
    </lineage>
</organism>
<reference key="1">
    <citation type="journal article" date="2002" name="J. Biol. Chem.">
        <title>Functional characterization of three novel tissue-specific anion exchangers SLC26A7, -A8, and -A9.</title>
        <authorList>
            <person name="Lohi H."/>
            <person name="Kujala M."/>
            <person name="Maekelae S."/>
            <person name="Lehtonen E."/>
            <person name="Kestilae M."/>
            <person name="Saarialho-Kere U."/>
            <person name="Markovich D."/>
            <person name="Kere J."/>
        </authorList>
    </citation>
    <scope>NUCLEOTIDE SEQUENCE [MRNA] (ISOFORM 1)</scope>
    <scope>FUNCTION</scope>
    <scope>TRANSPORTER ACTIVITY</scope>
    <scope>TISSUE SPECIFICITY</scope>
</reference>
<reference key="2">
    <citation type="submission" date="2000-10" db="EMBL/GenBank/DDBJ databases">
        <title>Cloning of human SLC26A9, a new member of the sulphate transporter gene family of anion transporter/exchangers.</title>
        <authorList>
            <person name="Mount D.B."/>
        </authorList>
    </citation>
    <scope>NUCLEOTIDE SEQUENCE [MRNA] (ISOFORM 2)</scope>
</reference>
<reference key="3">
    <citation type="journal article" date="2006" name="Nature">
        <title>The DNA sequence and biological annotation of human chromosome 1.</title>
        <authorList>
            <person name="Gregory S.G."/>
            <person name="Barlow K.F."/>
            <person name="McLay K.E."/>
            <person name="Kaul R."/>
            <person name="Swarbreck D."/>
            <person name="Dunham A."/>
            <person name="Scott C.E."/>
            <person name="Howe K.L."/>
            <person name="Woodfine K."/>
            <person name="Spencer C.C.A."/>
            <person name="Jones M.C."/>
            <person name="Gillson C."/>
            <person name="Searle S."/>
            <person name="Zhou Y."/>
            <person name="Kokocinski F."/>
            <person name="McDonald L."/>
            <person name="Evans R."/>
            <person name="Phillips K."/>
            <person name="Atkinson A."/>
            <person name="Cooper R."/>
            <person name="Jones C."/>
            <person name="Hall R.E."/>
            <person name="Andrews T.D."/>
            <person name="Lloyd C."/>
            <person name="Ainscough R."/>
            <person name="Almeida J.P."/>
            <person name="Ambrose K.D."/>
            <person name="Anderson F."/>
            <person name="Andrew R.W."/>
            <person name="Ashwell R.I.S."/>
            <person name="Aubin K."/>
            <person name="Babbage A.K."/>
            <person name="Bagguley C.L."/>
            <person name="Bailey J."/>
            <person name="Beasley H."/>
            <person name="Bethel G."/>
            <person name="Bird C.P."/>
            <person name="Bray-Allen S."/>
            <person name="Brown J.Y."/>
            <person name="Brown A.J."/>
            <person name="Buckley D."/>
            <person name="Burton J."/>
            <person name="Bye J."/>
            <person name="Carder C."/>
            <person name="Chapman J.C."/>
            <person name="Clark S.Y."/>
            <person name="Clarke G."/>
            <person name="Clee C."/>
            <person name="Cobley V."/>
            <person name="Collier R.E."/>
            <person name="Corby N."/>
            <person name="Coville G.J."/>
            <person name="Davies J."/>
            <person name="Deadman R."/>
            <person name="Dunn M."/>
            <person name="Earthrowl M."/>
            <person name="Ellington A.G."/>
            <person name="Errington H."/>
            <person name="Frankish A."/>
            <person name="Frankland J."/>
            <person name="French L."/>
            <person name="Garner P."/>
            <person name="Garnett J."/>
            <person name="Gay L."/>
            <person name="Ghori M.R.J."/>
            <person name="Gibson R."/>
            <person name="Gilby L.M."/>
            <person name="Gillett W."/>
            <person name="Glithero R.J."/>
            <person name="Grafham D.V."/>
            <person name="Griffiths C."/>
            <person name="Griffiths-Jones S."/>
            <person name="Grocock R."/>
            <person name="Hammond S."/>
            <person name="Harrison E.S.I."/>
            <person name="Hart E."/>
            <person name="Haugen E."/>
            <person name="Heath P.D."/>
            <person name="Holmes S."/>
            <person name="Holt K."/>
            <person name="Howden P.J."/>
            <person name="Hunt A.R."/>
            <person name="Hunt S.E."/>
            <person name="Hunter G."/>
            <person name="Isherwood J."/>
            <person name="James R."/>
            <person name="Johnson C."/>
            <person name="Johnson D."/>
            <person name="Joy A."/>
            <person name="Kay M."/>
            <person name="Kershaw J.K."/>
            <person name="Kibukawa M."/>
            <person name="Kimberley A.M."/>
            <person name="King A."/>
            <person name="Knights A.J."/>
            <person name="Lad H."/>
            <person name="Laird G."/>
            <person name="Lawlor S."/>
            <person name="Leongamornlert D.A."/>
            <person name="Lloyd D.M."/>
            <person name="Loveland J."/>
            <person name="Lovell J."/>
            <person name="Lush M.J."/>
            <person name="Lyne R."/>
            <person name="Martin S."/>
            <person name="Mashreghi-Mohammadi M."/>
            <person name="Matthews L."/>
            <person name="Matthews N.S.W."/>
            <person name="McLaren S."/>
            <person name="Milne S."/>
            <person name="Mistry S."/>
            <person name="Moore M.J.F."/>
            <person name="Nickerson T."/>
            <person name="O'Dell C.N."/>
            <person name="Oliver K."/>
            <person name="Palmeiri A."/>
            <person name="Palmer S.A."/>
            <person name="Parker A."/>
            <person name="Patel D."/>
            <person name="Pearce A.V."/>
            <person name="Peck A.I."/>
            <person name="Pelan S."/>
            <person name="Phelps K."/>
            <person name="Phillimore B.J."/>
            <person name="Plumb R."/>
            <person name="Rajan J."/>
            <person name="Raymond C."/>
            <person name="Rouse G."/>
            <person name="Saenphimmachak C."/>
            <person name="Sehra H.K."/>
            <person name="Sheridan E."/>
            <person name="Shownkeen R."/>
            <person name="Sims S."/>
            <person name="Skuce C.D."/>
            <person name="Smith M."/>
            <person name="Steward C."/>
            <person name="Subramanian S."/>
            <person name="Sycamore N."/>
            <person name="Tracey A."/>
            <person name="Tromans A."/>
            <person name="Van Helmond Z."/>
            <person name="Wall M."/>
            <person name="Wallis J.M."/>
            <person name="White S."/>
            <person name="Whitehead S.L."/>
            <person name="Wilkinson J.E."/>
            <person name="Willey D.L."/>
            <person name="Williams H."/>
            <person name="Wilming L."/>
            <person name="Wray P.W."/>
            <person name="Wu Z."/>
            <person name="Coulson A."/>
            <person name="Vaudin M."/>
            <person name="Sulston J.E."/>
            <person name="Durbin R.M."/>
            <person name="Hubbard T."/>
            <person name="Wooster R."/>
            <person name="Dunham I."/>
            <person name="Carter N.P."/>
            <person name="McVean G."/>
            <person name="Ross M.T."/>
            <person name="Harrow J."/>
            <person name="Olson M.V."/>
            <person name="Beck S."/>
            <person name="Rogers J."/>
            <person name="Bentley D.R."/>
        </authorList>
    </citation>
    <scope>NUCLEOTIDE SEQUENCE [LARGE SCALE GENOMIC DNA]</scope>
</reference>
<reference key="4">
    <citation type="submission" date="2005-07" db="EMBL/GenBank/DDBJ databases">
        <authorList>
            <person name="Mural R.J."/>
            <person name="Istrail S."/>
            <person name="Sutton G.G."/>
            <person name="Florea L."/>
            <person name="Halpern A.L."/>
            <person name="Mobarry C.M."/>
            <person name="Lippert R."/>
            <person name="Walenz B."/>
            <person name="Shatkay H."/>
            <person name="Dew I."/>
            <person name="Miller J.R."/>
            <person name="Flanigan M.J."/>
            <person name="Edwards N.J."/>
            <person name="Bolanos R."/>
            <person name="Fasulo D."/>
            <person name="Halldorsson B.V."/>
            <person name="Hannenhalli S."/>
            <person name="Turner R."/>
            <person name="Yooseph S."/>
            <person name="Lu F."/>
            <person name="Nusskern D.R."/>
            <person name="Shue B.C."/>
            <person name="Zheng X.H."/>
            <person name="Zhong F."/>
            <person name="Delcher A.L."/>
            <person name="Huson D.H."/>
            <person name="Kravitz S.A."/>
            <person name="Mouchard L."/>
            <person name="Reinert K."/>
            <person name="Remington K.A."/>
            <person name="Clark A.G."/>
            <person name="Waterman M.S."/>
            <person name="Eichler E.E."/>
            <person name="Adams M.D."/>
            <person name="Hunkapiller M.W."/>
            <person name="Myers E.W."/>
            <person name="Venter J.C."/>
        </authorList>
    </citation>
    <scope>NUCLEOTIDE SEQUENCE [LARGE SCALE GENOMIC DNA]</scope>
</reference>
<reference key="5">
    <citation type="journal article" date="2004" name="Genome Res.">
        <title>The status, quality, and expansion of the NIH full-length cDNA project: the Mammalian Gene Collection (MGC).</title>
        <authorList>
            <consortium name="The MGC Project Team"/>
        </authorList>
    </citation>
    <scope>NUCLEOTIDE SEQUENCE [LARGE SCALE MRNA] (ISOFORM 1)</scope>
    <source>
        <tissue>Testis</tissue>
    </source>
</reference>
<reference key="6">
    <citation type="journal article" date="2005" name="Am. J. Physiol.">
        <title>SLC26A9 is expressed in gastric surface epithelial cells, mediates Cl-/HCO3- exchange, and is inhibited by NH4+.</title>
        <authorList>
            <person name="Xu J."/>
            <person name="Henriksnas J."/>
            <person name="Barone S."/>
            <person name="Witte D."/>
            <person name="Shull G.E."/>
            <person name="Forte J.G."/>
            <person name="Holm L."/>
            <person name="Soleimani M."/>
        </authorList>
    </citation>
    <scope>FUNCTION</scope>
    <scope>TRANSPORTER ACTIVITY</scope>
</reference>
<reference key="7">
    <citation type="journal article" date="2007" name="J. Physiol. (Lond.)">
        <title>SLC26A9 is a Cl(-) channel regulated by the WNK kinases.</title>
        <authorList>
            <person name="Dorwart M.R."/>
            <person name="Shcheynikov N."/>
            <person name="Wang Y."/>
            <person name="Stippec S."/>
            <person name="Muallem S."/>
        </authorList>
    </citation>
    <scope>FUNCTION</scope>
    <scope>TRANSPORTER ACTIVITY</scope>
    <scope>SUBCELLULAR LOCATION</scope>
</reference>
<reference key="8">
    <citation type="journal article" date="2016" name="Am. J. Physiol.">
        <title>Generation and functional characterization of epithelial cells with stable expression of SLC26A9 Cl- channels.</title>
        <authorList>
            <person name="Salomon J.J."/>
            <person name="Spahn S."/>
            <person name="Wang X."/>
            <person name="Fuellekrug J."/>
            <person name="Bertrand C.A."/>
            <person name="Mall M.A."/>
        </authorList>
    </citation>
    <scope>FUNCTION</scope>
    <scope>TRANSPORTER ACTIVITY</scope>
    <scope>SUBCELLULAR LOCATION</scope>
</reference>
<reference key="9">
    <citation type="journal article" date="2012" name="Hum. Mutat.">
        <title>Functional analysis of nonsynonymous single nucleotide polymorphisms in human SLC26A9.</title>
        <authorList>
            <person name="Chen A.P."/>
            <person name="Chang M.H."/>
            <person name="Romero M.F."/>
        </authorList>
    </citation>
    <scope>VARIANTS ASN-70; ASN-127; THR-384; TRP-575; LEU-606; LEU-622; MET-744 AND ARG-748</scope>
    <scope>CHARACTERIZATION OF VARIANTS ASN-70; ASN-127; LEU-622 AND MET-744</scope>
</reference>
<reference evidence="14" key="10">
    <citation type="journal article" date="2020" name="Cell Discov.">
        <title>Structural insights into the gating mechanism of human SLC26A9 mediated by its C-terminal sequence.</title>
        <authorList>
            <person name="Chi X."/>
            <person name="Jin X."/>
            <person name="Chen Y."/>
            <person name="Lu X."/>
            <person name="Tu X."/>
            <person name="Li X."/>
            <person name="Zhang Y."/>
            <person name="Lei J."/>
            <person name="Huang J."/>
            <person name="Huang Z."/>
            <person name="Zhou Q."/>
            <person name="Pan X."/>
        </authorList>
    </citation>
    <scope>STRUCTURE BY ELECTRON MICROSCOPY (2.60 ANGSTROMS)</scope>
    <scope>FUNCTION</scope>
    <scope>TRANSPORTER ACTIVITY</scope>
    <scope>SUBUNIT</scope>
    <scope>TOPOLOGY</scope>
    <scope>MUTAGENESIS OF GLN-88; ILE-131; SER-132; GLU-166; GLU-201; 775-GLU--MET-782; 775-GLU-GLN-776; SER-781 AND PHE-783</scope>
</reference>
<sequence>MSQPRPRYVVDRAAYSLTLFDDEFEKKDRTYPVGEKLRNAFRCSSAKIKAVVFGLLPVLSWLPKYKIKDYIIPDLLGGLSGGSIQVPQGMAFALLANLPAVNGLYSSFFPLLTYFFLGGVHQMVPGTFAVISILVGNICLQLAPESKFQVFNNATNESYVDTAAMEAERLHVSATLACLTAIIQMGLGFMQFGFVAIYLSESFIRGFMTAAGLQILISVLKYIFGLTIPSYTGPGSIVFTFIDICKNLPHTNIASLIFALISGAFLVLVKELNARYMHKIRFPIPTEMIVVVVATAISGGCKMPKKYHMQIVGEIQRGFPTPVSPVVSQWKDMIGTAFSLAIVSYVINLAMGRTLANKHGYDVDSNQEMIALGCSNFFGSFFKIHVICCALSVTLAVDGAGGKSQVASLCVSLVVMITMLVLGIYLYPLPKSVLGALIAVNLKNSLKQLTDPYYLWRKSKLDCCIWVVSFLSSFFLSLPYGVAVGVAFSVLVVVFQTQFRNGYALAQVMDTDIYVNPKTYNRAQDIQGIKIITYCSPLYFANSEIFRQKVIAKTGMDPQKVLLAKQKYLKKQEKRRMRPTQQRRSLFMKTKTVSLQELQQDFENAPPTDPNNNQTPANGTSVSYITFSPDSSSPAQSEPPASAEAPGEPSDMLASVPPFVTFHTLILDMSGVSFVDLMGIKALAKLSSTYGKIGVKVFLVNIHAQVYNDISHGGVFEDGSLECKHVFPSIHDAVLFAQANARDVTPGHNFQGAPGDAELSLYDSEEDIRSYWDLEQEMFGSMFHAETLTAL</sequence>